<comment type="interaction">
    <interactant intactId="EBI-317531">
        <id>Q11103</id>
    </interactant>
    <interactant intactId="EBI-311862">
        <id>O17670</id>
        <label>eya-1</label>
    </interactant>
    <organismsDiffer>false</organismsDiffer>
    <experiments>3</experiments>
</comment>
<name>YL18_CAEEL</name>
<protein>
    <recommendedName>
        <fullName>Uncharacterized protein C02F12.8</fullName>
    </recommendedName>
</protein>
<reference key="1">
    <citation type="journal article" date="1998" name="Science">
        <title>Genome sequence of the nematode C. elegans: a platform for investigating biology.</title>
        <authorList>
            <consortium name="The C. elegans sequencing consortium"/>
        </authorList>
    </citation>
    <scope>NUCLEOTIDE SEQUENCE [LARGE SCALE GENOMIC DNA]</scope>
    <source>
        <strain>Bristol N2</strain>
    </source>
</reference>
<dbReference type="EMBL" id="FO080254">
    <property type="protein sequence ID" value="CCD62376.1"/>
    <property type="molecule type" value="Genomic_DNA"/>
</dbReference>
<dbReference type="PIR" id="T34082">
    <property type="entry name" value="T34082"/>
</dbReference>
<dbReference type="RefSeq" id="NP_508636.1">
    <property type="nucleotide sequence ID" value="NM_076235.7"/>
</dbReference>
<dbReference type="BioGRID" id="45597">
    <property type="interactions" value="11"/>
</dbReference>
<dbReference type="DIP" id="DIP-25754N"/>
<dbReference type="FunCoup" id="Q11103">
    <property type="interactions" value="1423"/>
</dbReference>
<dbReference type="IntAct" id="Q11103">
    <property type="interactions" value="5"/>
</dbReference>
<dbReference type="STRING" id="6239.C02F12.8.1"/>
<dbReference type="PaxDb" id="6239-C02F12.8"/>
<dbReference type="PeptideAtlas" id="Q11103"/>
<dbReference type="EnsemblMetazoa" id="C02F12.8.1">
    <property type="protein sequence ID" value="C02F12.8.1"/>
    <property type="gene ID" value="WBGene00015357"/>
</dbReference>
<dbReference type="GeneID" id="180659"/>
<dbReference type="KEGG" id="cel:CELE_C02F12.8"/>
<dbReference type="UCSC" id="C02F12.8">
    <property type="organism name" value="c. elegans"/>
</dbReference>
<dbReference type="AGR" id="WB:WBGene00015357"/>
<dbReference type="CTD" id="180659"/>
<dbReference type="WormBase" id="C02F12.8">
    <property type="protein sequence ID" value="CE03902"/>
    <property type="gene ID" value="WBGene00015357"/>
</dbReference>
<dbReference type="eggNOG" id="ENOG502THST">
    <property type="taxonomic scope" value="Eukaryota"/>
</dbReference>
<dbReference type="HOGENOM" id="CLU_407821_0_0_1"/>
<dbReference type="InParanoid" id="Q11103"/>
<dbReference type="OMA" id="TTHAHEF"/>
<dbReference type="OrthoDB" id="5838592at2759"/>
<dbReference type="PRO" id="PR:Q11103"/>
<dbReference type="Proteomes" id="UP000001940">
    <property type="component" value="Chromosome X"/>
</dbReference>
<dbReference type="Bgee" id="WBGene00015357">
    <property type="expression patterns" value="Expressed in germ line (C elegans) and 4 other cell types or tissues"/>
</dbReference>
<evidence type="ECO:0000256" key="1">
    <source>
        <dbReference type="SAM" id="MobiDB-lite"/>
    </source>
</evidence>
<feature type="chain" id="PRO_0000065115" description="Uncharacterized protein C02F12.8">
    <location>
        <begin position="1"/>
        <end position="687"/>
    </location>
</feature>
<feature type="region of interest" description="Disordered" evidence="1">
    <location>
        <begin position="277"/>
        <end position="337"/>
    </location>
</feature>
<feature type="region of interest" description="Disordered" evidence="1">
    <location>
        <begin position="342"/>
        <end position="361"/>
    </location>
</feature>
<feature type="region of interest" description="Disordered" evidence="1">
    <location>
        <begin position="531"/>
        <end position="564"/>
    </location>
</feature>
<feature type="compositionally biased region" description="Low complexity" evidence="1">
    <location>
        <begin position="277"/>
        <end position="295"/>
    </location>
</feature>
<feature type="compositionally biased region" description="Polar residues" evidence="1">
    <location>
        <begin position="300"/>
        <end position="313"/>
    </location>
</feature>
<proteinExistence type="evidence at protein level"/>
<accession>Q11103</accession>
<organism>
    <name type="scientific">Caenorhabditis elegans</name>
    <dbReference type="NCBI Taxonomy" id="6239"/>
    <lineage>
        <taxon>Eukaryota</taxon>
        <taxon>Metazoa</taxon>
        <taxon>Ecdysozoa</taxon>
        <taxon>Nematoda</taxon>
        <taxon>Chromadorea</taxon>
        <taxon>Rhabditida</taxon>
        <taxon>Rhabditina</taxon>
        <taxon>Rhabditomorpha</taxon>
        <taxon>Rhabditoidea</taxon>
        <taxon>Rhabditidae</taxon>
        <taxon>Peloderinae</taxon>
        <taxon>Caenorhabditis</taxon>
    </lineage>
</organism>
<sequence>MQNDRSRWKTEGHSSEVHEDFLRNSVQRRNQLEKILFSYNNLHRLDPSYGEIVQRAFESNDPIALWNFENEVLLNSKDVDDLMQQQFAAPVQNNQCPNPYQNCGYQNNLVSTLDASFKVHPFAQHGNYMPPPAQFASNPNVFPQPVPPYTMDLAASNSGFAHPQIVNQPMHPHVPVGSQNYNPPQFVPAPPTMMPVGAVMVSQGSYSMSPPQIDTSKPPSGYGFSSPIFPSPSYSQYSGPPANEGFPDIIYDNNGVAYCRVVSAPVCVVSMSQSGSSVCSSQSFSSGQSDISMSSRPPINGSSVGNGSLSPMTDSVREESEDEDYGTLTPVGQQDCDLDSVDTESVANEPEPYSSTMSEMPPLDDVDDIMENLDLSKTLIEPETLEHSDNMSVVEIKSEPVSEMTTDSLIVDDDRDTSISEIIKYLDTSDDVLESWQEATGRKKCFVPQKTQKLVYPLPLSKVEKPLQKCQQTLAASTIDEDSKEASTIALPDARKKLTKKEKRLMAAQKANQLETDDDVLEAAYRERQKHVEQAGGDYSSSGQKDQKKKRGKRPVSNPPPSLISPQILHAVQMAIANRAKKISESGRPIFHENFSYQKFYETVDTFVKTWEENSNEMNKVLQFIEKRILAFKMVQRPQSLSRITIYEQLQLNLPPAILPELCFLAGLTSDSTDKLEYYEEIFFNLF</sequence>
<keyword id="KW-1185">Reference proteome</keyword>
<gene>
    <name type="ORF">C02F12.8</name>
</gene>